<dbReference type="EMBL" id="AE014613">
    <property type="protein sequence ID" value="AAO70969.1"/>
    <property type="molecule type" value="Genomic_DNA"/>
</dbReference>
<dbReference type="EMBL" id="AL513382">
    <property type="protein sequence ID" value="CAD09466.1"/>
    <property type="molecule type" value="Genomic_DNA"/>
</dbReference>
<dbReference type="RefSeq" id="NP_457896.1">
    <property type="nucleotide sequence ID" value="NC_003198.1"/>
</dbReference>
<dbReference type="STRING" id="220341.gene:17587561"/>
<dbReference type="KEGG" id="stt:t3448"/>
<dbReference type="KEGG" id="sty:STY3707"/>
<dbReference type="PATRIC" id="fig|220341.7.peg.3778"/>
<dbReference type="eggNOG" id="COG3085">
    <property type="taxonomic scope" value="Bacteria"/>
</dbReference>
<dbReference type="HOGENOM" id="CLU_144599_2_2_6"/>
<dbReference type="OMA" id="CRGIREP"/>
<dbReference type="OrthoDB" id="6400110at2"/>
<dbReference type="Proteomes" id="UP000000541">
    <property type="component" value="Chromosome"/>
</dbReference>
<dbReference type="Proteomes" id="UP000002670">
    <property type="component" value="Chromosome"/>
</dbReference>
<dbReference type="InterPro" id="IPR007335">
    <property type="entry name" value="DUF413"/>
</dbReference>
<dbReference type="NCBIfam" id="NF008251">
    <property type="entry name" value="PRK11027.1-1"/>
    <property type="match status" value="1"/>
</dbReference>
<dbReference type="NCBIfam" id="NF008252">
    <property type="entry name" value="PRK11027.1-2"/>
    <property type="match status" value="1"/>
</dbReference>
<dbReference type="NCBIfam" id="NF008253">
    <property type="entry name" value="PRK11027.1-4"/>
    <property type="match status" value="1"/>
</dbReference>
<dbReference type="Pfam" id="PF04219">
    <property type="entry name" value="DUF413"/>
    <property type="match status" value="1"/>
</dbReference>
<protein>
    <recommendedName>
        <fullName evidence="2">Macrodomain Ori protein</fullName>
    </recommendedName>
</protein>
<name>MAOP_SALTI</name>
<gene>
    <name evidence="2" type="primary">maoP</name>
    <name type="synonym">yifE</name>
    <name type="ordered locus">STY3707</name>
    <name type="ordered locus">t3448</name>
</gene>
<reference key="1">
    <citation type="journal article" date="2003" name="J. Bacteriol.">
        <title>Comparative genomics of Salmonella enterica serovar Typhi strains Ty2 and CT18.</title>
        <authorList>
            <person name="Deng W."/>
            <person name="Liou S.-R."/>
            <person name="Plunkett G. III"/>
            <person name="Mayhew G.F."/>
            <person name="Rose D.J."/>
            <person name="Burland V."/>
            <person name="Kodoyianni V."/>
            <person name="Schwartz D.C."/>
            <person name="Blattner F.R."/>
        </authorList>
    </citation>
    <scope>NUCLEOTIDE SEQUENCE [LARGE SCALE GENOMIC DNA]</scope>
    <source>
        <strain>ATCC 700931 / Ty2</strain>
    </source>
</reference>
<reference key="2">
    <citation type="journal article" date="2001" name="Nature">
        <title>Complete genome sequence of a multiple drug resistant Salmonella enterica serovar Typhi CT18.</title>
        <authorList>
            <person name="Parkhill J."/>
            <person name="Dougan G."/>
            <person name="James K.D."/>
            <person name="Thomson N.R."/>
            <person name="Pickard D."/>
            <person name="Wain J."/>
            <person name="Churcher C.M."/>
            <person name="Mungall K.L."/>
            <person name="Bentley S.D."/>
            <person name="Holden M.T.G."/>
            <person name="Sebaihia M."/>
            <person name="Baker S."/>
            <person name="Basham D."/>
            <person name="Brooks K."/>
            <person name="Chillingworth T."/>
            <person name="Connerton P."/>
            <person name="Cronin A."/>
            <person name="Davis P."/>
            <person name="Davies R.M."/>
            <person name="Dowd L."/>
            <person name="White N."/>
            <person name="Farrar J."/>
            <person name="Feltwell T."/>
            <person name="Hamlin N."/>
            <person name="Haque A."/>
            <person name="Hien T.T."/>
            <person name="Holroyd S."/>
            <person name="Jagels K."/>
            <person name="Krogh A."/>
            <person name="Larsen T.S."/>
            <person name="Leather S."/>
            <person name="Moule S."/>
            <person name="O'Gaora P."/>
            <person name="Parry C."/>
            <person name="Quail M.A."/>
            <person name="Rutherford K.M."/>
            <person name="Simmonds M."/>
            <person name="Skelton J."/>
            <person name="Stevens K."/>
            <person name="Whitehead S."/>
            <person name="Barrell B.G."/>
        </authorList>
    </citation>
    <scope>NUCLEOTIDE SEQUENCE [LARGE SCALE GENOMIC DNA]</scope>
    <source>
        <strain>CT18</strain>
    </source>
</reference>
<evidence type="ECO:0000250" key="1"/>
<evidence type="ECO:0000250" key="2">
    <source>
        <dbReference type="UniProtKB" id="P0ADN2"/>
    </source>
</evidence>
<evidence type="ECO:0000256" key="3">
    <source>
        <dbReference type="SAM" id="MobiDB-lite"/>
    </source>
</evidence>
<evidence type="ECO:0000305" key="4"/>
<proteinExistence type="inferred from homology"/>
<accession>Q9L6T3</accession>
<accession>Q7AM34</accession>
<sequence>MAESFTTTNRYFDNKHYPRGFSRHGDFTIKEAQLLERHGHAFNDLDLGKREPVTEEEKLFVAVCRGEREPVTDAERVWSKYMTRIKRPKRFHTLSGGKPQVEGAEDYTEADD</sequence>
<feature type="initiator methionine" description="Removed" evidence="1">
    <location>
        <position position="1"/>
    </location>
</feature>
<feature type="chain" id="PRO_0000292441" description="Macrodomain Ori protein">
    <location>
        <begin position="2"/>
        <end position="112"/>
    </location>
</feature>
<feature type="region of interest" description="Disordered" evidence="3">
    <location>
        <begin position="91"/>
        <end position="112"/>
    </location>
</feature>
<feature type="compositionally biased region" description="Acidic residues" evidence="3">
    <location>
        <begin position="103"/>
        <end position="112"/>
    </location>
</feature>
<organism>
    <name type="scientific">Salmonella typhi</name>
    <dbReference type="NCBI Taxonomy" id="90370"/>
    <lineage>
        <taxon>Bacteria</taxon>
        <taxon>Pseudomonadati</taxon>
        <taxon>Pseudomonadota</taxon>
        <taxon>Gammaproteobacteria</taxon>
        <taxon>Enterobacterales</taxon>
        <taxon>Enterobacteriaceae</taxon>
        <taxon>Salmonella</taxon>
    </lineage>
</organism>
<comment type="function">
    <text evidence="2">Involved in the organization of the Ori region of the chromosome into a macrodomain (MD) (By similarity). It constrains DNA mobility in the Ori macrodomain and limits long-distance DNA interactions with other chromosomal regions (By similarity).</text>
</comment>
<comment type="similarity">
    <text evidence="4">Belongs to the MaoP family.</text>
</comment>